<protein>
    <recommendedName>
        <fullName>Non-structural protein NS3</fullName>
    </recommendedName>
    <component>
        <recommendedName>
            <fullName>Non-structural protein NS3A</fullName>
        </recommendedName>
    </component>
</protein>
<accession>Q64903</accession>
<gene>
    <name type="primary">Segment-10</name>
</gene>
<name>VNS3_AHSV1</name>
<reference key="1">
    <citation type="journal article" date="1994" name="Virus Res.">
        <title>Phylogenetic analysis of segment 10 from African horsesickness virus and cognate genes from other orbiviruses.</title>
        <authorList>
            <person name="de Sa R."/>
            <person name="Zellner M."/>
            <person name="Grubman M.J."/>
        </authorList>
    </citation>
    <scope>NUCLEOTIDE SEQUENCE [GENOMIC RNA]</scope>
</reference>
<organismHost>
    <name type="scientific">Camelus dromedarius</name>
    <name type="common">Dromedary</name>
    <name type="synonym">Arabian camel</name>
    <dbReference type="NCBI Taxonomy" id="9838"/>
</organismHost>
<organismHost>
    <name type="scientific">Canis lupus familiaris</name>
    <name type="common">Dog</name>
    <name type="synonym">Canis familiaris</name>
    <dbReference type="NCBI Taxonomy" id="9615"/>
</organismHost>
<organismHost>
    <name type="scientific">Equus asinus</name>
    <name type="common">Donkey</name>
    <name type="synonym">Equus africanus asinus</name>
    <dbReference type="NCBI Taxonomy" id="9793"/>
</organismHost>
<organismHost>
    <name type="scientific">Equus caballus</name>
    <name type="common">Horse</name>
    <dbReference type="NCBI Taxonomy" id="9796"/>
</organismHost>
<organismHost>
    <name type="scientific">Equus hemionus</name>
    <name type="common">Onager</name>
    <name type="synonym">Asian wild ass</name>
    <dbReference type="NCBI Taxonomy" id="9794"/>
</organismHost>
<organismHost>
    <name type="scientific">Equus quagga burchellii</name>
    <name type="common">Burchell's zebra</name>
    <name type="synonym">Equus burchelli</name>
    <dbReference type="NCBI Taxonomy" id="89252"/>
</organismHost>
<organismHost>
    <name type="scientific">Loxodonta africana</name>
    <name type="common">African elephant</name>
    <dbReference type="NCBI Taxonomy" id="9785"/>
</organismHost>
<proteinExistence type="inferred from homology"/>
<comment type="function">
    <text>May play a role in the release of virions from infected cells.</text>
</comment>
<comment type="similarity">
    <text evidence="1">Belongs to the orbivirus NS3 family.</text>
</comment>
<dbReference type="EMBL" id="U02711">
    <property type="protein sequence ID" value="AAA21526.1"/>
    <property type="molecule type" value="Genomic_RNA"/>
</dbReference>
<dbReference type="SMR" id="Q64903"/>
<dbReference type="InterPro" id="IPR002565">
    <property type="entry name" value="Orbi_NS3"/>
</dbReference>
<dbReference type="Pfam" id="PF01616">
    <property type="entry name" value="Orbi_NS3"/>
    <property type="match status" value="1"/>
</dbReference>
<sequence length="218" mass="23756">MNLASISQSYMSHNENERSIVPYIPPPYHPTAPALAVSASQMETMSLGILNQAMSSSAGASGALKDEKAAYGAVAEALRDPEPIRKIKRQVGIQTLKTLKVELSGMRRKKLILKIIMFICANVTMATSLVGGMSIVDEDIAKHLAFDGKGDWVSKTVHGLNLLCTTMLLAANKISEKVREEIARTKRDIAKRQSYVSAATMSWDGDSVTQLRDVKYGD</sequence>
<evidence type="ECO:0000305" key="1"/>
<organism>
    <name type="scientific">African horse sickness virus 1</name>
    <name type="common">AHSV-1</name>
    <dbReference type="NCBI Taxonomy" id="33714"/>
    <lineage>
        <taxon>Viruses</taxon>
        <taxon>Riboviria</taxon>
        <taxon>Orthornavirae</taxon>
        <taxon>Duplornaviricota</taxon>
        <taxon>Resentoviricetes</taxon>
        <taxon>Reovirales</taxon>
        <taxon>Sedoreoviridae</taxon>
        <taxon>Orbivirus</taxon>
        <taxon>African horse sickness virus</taxon>
    </lineage>
</organism>
<feature type="chain" id="PRO_0000040636" description="Non-structural protein NS3">
    <location>
        <begin position="1"/>
        <end position="218"/>
    </location>
</feature>
<feature type="chain" id="PRO_0000040637" description="Non-structural protein NS3A">
    <location>
        <begin position="11"/>
        <end position="218"/>
    </location>
</feature>